<accession>P94427</accession>
<evidence type="ECO:0000250" key="1"/>
<evidence type="ECO:0000305" key="2"/>
<keyword id="KW-0032">Aminotransferase</keyword>
<keyword id="KW-0663">Pyridoxal phosphate</keyword>
<keyword id="KW-1185">Reference proteome</keyword>
<keyword id="KW-0808">Transferase</keyword>
<reference key="1">
    <citation type="journal article" date="1996" name="Microbiology">
        <title>The 25 degrees-36 degrees region of the Bacillus subtilis chromosome: determination of the sequence of a 146 kb segment and identification of 113 genes.</title>
        <authorList>
            <person name="Yamane K."/>
            <person name="Kumano M."/>
            <person name="Kurita K."/>
        </authorList>
    </citation>
    <scope>NUCLEOTIDE SEQUENCE [GENOMIC DNA]</scope>
    <source>
        <strain>168</strain>
    </source>
</reference>
<reference key="2">
    <citation type="journal article" date="1997" name="Nature">
        <title>The complete genome sequence of the Gram-positive bacterium Bacillus subtilis.</title>
        <authorList>
            <person name="Kunst F."/>
            <person name="Ogasawara N."/>
            <person name="Moszer I."/>
            <person name="Albertini A.M."/>
            <person name="Alloni G."/>
            <person name="Azevedo V."/>
            <person name="Bertero M.G."/>
            <person name="Bessieres P."/>
            <person name="Bolotin A."/>
            <person name="Borchert S."/>
            <person name="Borriss R."/>
            <person name="Boursier L."/>
            <person name="Brans A."/>
            <person name="Braun M."/>
            <person name="Brignell S.C."/>
            <person name="Bron S."/>
            <person name="Brouillet S."/>
            <person name="Bruschi C.V."/>
            <person name="Caldwell B."/>
            <person name="Capuano V."/>
            <person name="Carter N.M."/>
            <person name="Choi S.-K."/>
            <person name="Codani J.-J."/>
            <person name="Connerton I.F."/>
            <person name="Cummings N.J."/>
            <person name="Daniel R.A."/>
            <person name="Denizot F."/>
            <person name="Devine K.M."/>
            <person name="Duesterhoeft A."/>
            <person name="Ehrlich S.D."/>
            <person name="Emmerson P.T."/>
            <person name="Entian K.-D."/>
            <person name="Errington J."/>
            <person name="Fabret C."/>
            <person name="Ferrari E."/>
            <person name="Foulger D."/>
            <person name="Fritz C."/>
            <person name="Fujita M."/>
            <person name="Fujita Y."/>
            <person name="Fuma S."/>
            <person name="Galizzi A."/>
            <person name="Galleron N."/>
            <person name="Ghim S.-Y."/>
            <person name="Glaser P."/>
            <person name="Goffeau A."/>
            <person name="Golightly E.J."/>
            <person name="Grandi G."/>
            <person name="Guiseppi G."/>
            <person name="Guy B.J."/>
            <person name="Haga K."/>
            <person name="Haiech J."/>
            <person name="Harwood C.R."/>
            <person name="Henaut A."/>
            <person name="Hilbert H."/>
            <person name="Holsappel S."/>
            <person name="Hosono S."/>
            <person name="Hullo M.-F."/>
            <person name="Itaya M."/>
            <person name="Jones L.-M."/>
            <person name="Joris B."/>
            <person name="Karamata D."/>
            <person name="Kasahara Y."/>
            <person name="Klaerr-Blanchard M."/>
            <person name="Klein C."/>
            <person name="Kobayashi Y."/>
            <person name="Koetter P."/>
            <person name="Koningstein G."/>
            <person name="Krogh S."/>
            <person name="Kumano M."/>
            <person name="Kurita K."/>
            <person name="Lapidus A."/>
            <person name="Lardinois S."/>
            <person name="Lauber J."/>
            <person name="Lazarevic V."/>
            <person name="Lee S.-M."/>
            <person name="Levine A."/>
            <person name="Liu H."/>
            <person name="Masuda S."/>
            <person name="Mauel C."/>
            <person name="Medigue C."/>
            <person name="Medina N."/>
            <person name="Mellado R.P."/>
            <person name="Mizuno M."/>
            <person name="Moestl D."/>
            <person name="Nakai S."/>
            <person name="Noback M."/>
            <person name="Noone D."/>
            <person name="O'Reilly M."/>
            <person name="Ogawa K."/>
            <person name="Ogiwara A."/>
            <person name="Oudega B."/>
            <person name="Park S.-H."/>
            <person name="Parro V."/>
            <person name="Pohl T.M."/>
            <person name="Portetelle D."/>
            <person name="Porwollik S."/>
            <person name="Prescott A.M."/>
            <person name="Presecan E."/>
            <person name="Pujic P."/>
            <person name="Purnelle B."/>
            <person name="Rapoport G."/>
            <person name="Rey M."/>
            <person name="Reynolds S."/>
            <person name="Rieger M."/>
            <person name="Rivolta C."/>
            <person name="Rocha E."/>
            <person name="Roche B."/>
            <person name="Rose M."/>
            <person name="Sadaie Y."/>
            <person name="Sato T."/>
            <person name="Scanlan E."/>
            <person name="Schleich S."/>
            <person name="Schroeter R."/>
            <person name="Scoffone F."/>
            <person name="Sekiguchi J."/>
            <person name="Sekowska A."/>
            <person name="Seror S.J."/>
            <person name="Serror P."/>
            <person name="Shin B.-S."/>
            <person name="Soldo B."/>
            <person name="Sorokin A."/>
            <person name="Tacconi E."/>
            <person name="Takagi T."/>
            <person name="Takahashi H."/>
            <person name="Takemaru K."/>
            <person name="Takeuchi M."/>
            <person name="Tamakoshi A."/>
            <person name="Tanaka T."/>
            <person name="Terpstra P."/>
            <person name="Tognoni A."/>
            <person name="Tosato V."/>
            <person name="Uchiyama S."/>
            <person name="Vandenbol M."/>
            <person name="Vannier F."/>
            <person name="Vassarotti A."/>
            <person name="Viari A."/>
            <person name="Wambutt R."/>
            <person name="Wedler E."/>
            <person name="Wedler H."/>
            <person name="Weitzenegger T."/>
            <person name="Winters P."/>
            <person name="Wipat A."/>
            <person name="Yamamoto H."/>
            <person name="Yamane K."/>
            <person name="Yasumoto K."/>
            <person name="Yata K."/>
            <person name="Yoshida K."/>
            <person name="Yoshikawa H.-F."/>
            <person name="Zumstein E."/>
            <person name="Yoshikawa H."/>
            <person name="Danchin A."/>
        </authorList>
    </citation>
    <scope>NUCLEOTIDE SEQUENCE [LARGE SCALE GENOMIC DNA]</scope>
    <source>
        <strain>168</strain>
    </source>
</reference>
<name>GABT_BACSU</name>
<organism>
    <name type="scientific">Bacillus subtilis (strain 168)</name>
    <dbReference type="NCBI Taxonomy" id="224308"/>
    <lineage>
        <taxon>Bacteria</taxon>
        <taxon>Bacillati</taxon>
        <taxon>Bacillota</taxon>
        <taxon>Bacilli</taxon>
        <taxon>Bacillales</taxon>
        <taxon>Bacillaceae</taxon>
        <taxon>Bacillus</taxon>
    </lineage>
</organism>
<sequence length="436" mass="47249">MSQTTASITTAQWQQKRDQFVSKGVSNGNRSLAVKGEGAELYDLDGRRFIDFAGAIGTLNVGHSHPKVVEAVKRQAEELIHPGFNVMMYPTYIELAEKLCGIAPGSHEKKAIFLNSGAEAVENAVKIARKYTKRQGVVSFTRGFHGRTNMTMSMTSKVKPYKFGFGPFAPEVYQAPFPYYYQKPAGMSDESYDDMVIQAFNDFFIASVAPETVACVVMEPVQGEGGFIIPSKRFVQHVASFCKEHGIVFVADEIQTGFARTGTYFAIEHFDVVPDLITVSKSLAAGLPLSGVIGRAEMLDAAAPGELGGTYAGSPLGCAAALAVLDIIEEEGLNERSEEIGKIIEDKAYEWKQEFPFIGDIRRLGAMAAIEIVKDPDTREPDKTKAAAIAAYANQNGLLLLTAGINGNIIRFLTPLVISDSLLNEGLSILEAGLRA</sequence>
<protein>
    <recommendedName>
        <fullName>Probable 4-aminobutyrate aminotransferase</fullName>
        <ecNumber>2.6.1.19</ecNumber>
    </recommendedName>
    <alternativeName>
        <fullName>(S)-3-amino-2-methylpropionate transaminase</fullName>
        <ecNumber>2.6.1.22</ecNumber>
    </alternativeName>
    <alternativeName>
        <fullName>GABA aminotransferase</fullName>
        <shortName>GABA-AT</shortName>
    </alternativeName>
    <alternativeName>
        <fullName>Gamma-amino-N-butyrate transaminase</fullName>
        <shortName>GABA transaminase</shortName>
    </alternativeName>
    <alternativeName>
        <fullName>Glutamate:succinic semialdehyde transaminase</fullName>
    </alternativeName>
    <alternativeName>
        <fullName>L-AIBAT</fullName>
    </alternativeName>
</protein>
<proteinExistence type="inferred from homology"/>
<dbReference type="EC" id="2.6.1.19"/>
<dbReference type="EC" id="2.6.1.22"/>
<dbReference type="EMBL" id="D50453">
    <property type="protein sequence ID" value="BAA09021.1"/>
    <property type="molecule type" value="Genomic_DNA"/>
</dbReference>
<dbReference type="EMBL" id="AL009126">
    <property type="protein sequence ID" value="CAB12198.1"/>
    <property type="molecule type" value="Genomic_DNA"/>
</dbReference>
<dbReference type="PIR" id="C69764">
    <property type="entry name" value="C69764"/>
</dbReference>
<dbReference type="RefSeq" id="NP_388272.1">
    <property type="nucleotide sequence ID" value="NC_000964.3"/>
</dbReference>
<dbReference type="RefSeq" id="WP_003234459.1">
    <property type="nucleotide sequence ID" value="NZ_OZ025638.1"/>
</dbReference>
<dbReference type="SMR" id="P94427"/>
<dbReference type="FunCoup" id="P94427">
    <property type="interactions" value="263"/>
</dbReference>
<dbReference type="STRING" id="224308.BSU03900"/>
<dbReference type="PaxDb" id="224308-BSU03900"/>
<dbReference type="EnsemblBacteria" id="CAB12198">
    <property type="protein sequence ID" value="CAB12198"/>
    <property type="gene ID" value="BSU_03900"/>
</dbReference>
<dbReference type="GeneID" id="938264"/>
<dbReference type="KEGG" id="bsu:BSU03900"/>
<dbReference type="PATRIC" id="fig|224308.179.peg.413"/>
<dbReference type="eggNOG" id="COG0160">
    <property type="taxonomic scope" value="Bacteria"/>
</dbReference>
<dbReference type="InParanoid" id="P94427"/>
<dbReference type="OrthoDB" id="9807885at2"/>
<dbReference type="PhylomeDB" id="P94427"/>
<dbReference type="BioCyc" id="BSUB:BSU03900-MONOMER"/>
<dbReference type="UniPathway" id="UPA00733"/>
<dbReference type="Proteomes" id="UP000001570">
    <property type="component" value="Chromosome"/>
</dbReference>
<dbReference type="GO" id="GO:0005829">
    <property type="term" value="C:cytosol"/>
    <property type="evidence" value="ECO:0000318"/>
    <property type="project" value="GO_Central"/>
</dbReference>
<dbReference type="GO" id="GO:0047298">
    <property type="term" value="F:(S)-3-amino-2-methylpropionate transaminase activity"/>
    <property type="evidence" value="ECO:0007669"/>
    <property type="project" value="UniProtKB-EC"/>
</dbReference>
<dbReference type="GO" id="GO:0034386">
    <property type="term" value="F:4-aminobutyrate:2-oxoglutarate transaminase activity"/>
    <property type="evidence" value="ECO:0007669"/>
    <property type="project" value="UniProtKB-EC"/>
</dbReference>
<dbReference type="GO" id="GO:0030170">
    <property type="term" value="F:pyridoxal phosphate binding"/>
    <property type="evidence" value="ECO:0000318"/>
    <property type="project" value="GO_Central"/>
</dbReference>
<dbReference type="GO" id="GO:0009450">
    <property type="term" value="P:gamma-aminobutyric acid catabolic process"/>
    <property type="evidence" value="ECO:0000318"/>
    <property type="project" value="GO_Central"/>
</dbReference>
<dbReference type="CDD" id="cd00610">
    <property type="entry name" value="OAT_like"/>
    <property type="match status" value="1"/>
</dbReference>
<dbReference type="FunFam" id="3.40.640.10:FF:000013">
    <property type="entry name" value="4-aminobutyrate aminotransferase"/>
    <property type="match status" value="1"/>
</dbReference>
<dbReference type="Gene3D" id="3.90.1150.10">
    <property type="entry name" value="Aspartate Aminotransferase, domain 1"/>
    <property type="match status" value="1"/>
</dbReference>
<dbReference type="Gene3D" id="3.40.640.10">
    <property type="entry name" value="Type I PLP-dependent aspartate aminotransferase-like (Major domain)"/>
    <property type="match status" value="1"/>
</dbReference>
<dbReference type="InterPro" id="IPR004632">
    <property type="entry name" value="4NH2But_aminotransferase_bac"/>
</dbReference>
<dbReference type="InterPro" id="IPR005814">
    <property type="entry name" value="Aminotrans_3"/>
</dbReference>
<dbReference type="InterPro" id="IPR049704">
    <property type="entry name" value="Aminotrans_3_PPA_site"/>
</dbReference>
<dbReference type="InterPro" id="IPR050103">
    <property type="entry name" value="Class-III_PLP-dep_AT"/>
</dbReference>
<dbReference type="InterPro" id="IPR015424">
    <property type="entry name" value="PyrdxlP-dep_Trfase"/>
</dbReference>
<dbReference type="InterPro" id="IPR015421">
    <property type="entry name" value="PyrdxlP-dep_Trfase_major"/>
</dbReference>
<dbReference type="InterPro" id="IPR015422">
    <property type="entry name" value="PyrdxlP-dep_Trfase_small"/>
</dbReference>
<dbReference type="NCBIfam" id="TIGR00700">
    <property type="entry name" value="GABAtrnsam"/>
    <property type="match status" value="1"/>
</dbReference>
<dbReference type="NCBIfam" id="NF005376">
    <property type="entry name" value="PRK06918.1"/>
    <property type="match status" value="1"/>
</dbReference>
<dbReference type="PANTHER" id="PTHR11986">
    <property type="entry name" value="AMINOTRANSFERASE CLASS III"/>
    <property type="match status" value="1"/>
</dbReference>
<dbReference type="PANTHER" id="PTHR11986:SF58">
    <property type="entry name" value="LEUCINE_METHIONINE RACEMASE"/>
    <property type="match status" value="1"/>
</dbReference>
<dbReference type="Pfam" id="PF00202">
    <property type="entry name" value="Aminotran_3"/>
    <property type="match status" value="1"/>
</dbReference>
<dbReference type="PIRSF" id="PIRSF000521">
    <property type="entry name" value="Transaminase_4ab_Lys_Orn"/>
    <property type="match status" value="1"/>
</dbReference>
<dbReference type="SUPFAM" id="SSF53383">
    <property type="entry name" value="PLP-dependent transferases"/>
    <property type="match status" value="1"/>
</dbReference>
<dbReference type="PROSITE" id="PS00600">
    <property type="entry name" value="AA_TRANSFER_CLASS_3"/>
    <property type="match status" value="1"/>
</dbReference>
<feature type="chain" id="PRO_0000120383" description="Probable 4-aminobutyrate aminotransferase">
    <location>
        <begin position="1"/>
        <end position="436"/>
    </location>
</feature>
<feature type="modified residue" description="N6-(pyridoxal phosphate)lysine" evidence="1">
    <location>
        <position position="281"/>
    </location>
</feature>
<comment type="catalytic activity">
    <reaction>
        <text>4-aminobutanoate + 2-oxoglutarate = succinate semialdehyde + L-glutamate</text>
        <dbReference type="Rhea" id="RHEA:23352"/>
        <dbReference type="ChEBI" id="CHEBI:16810"/>
        <dbReference type="ChEBI" id="CHEBI:29985"/>
        <dbReference type="ChEBI" id="CHEBI:57706"/>
        <dbReference type="ChEBI" id="CHEBI:59888"/>
        <dbReference type="EC" id="2.6.1.19"/>
    </reaction>
</comment>
<comment type="catalytic activity">
    <reaction>
        <text>(S)-3-amino-2-methylpropanoate + 2-oxoglutarate = 2-methyl-3-oxopropanoate + L-glutamate</text>
        <dbReference type="Rhea" id="RHEA:13993"/>
        <dbReference type="ChEBI" id="CHEBI:16810"/>
        <dbReference type="ChEBI" id="CHEBI:29985"/>
        <dbReference type="ChEBI" id="CHEBI:57700"/>
        <dbReference type="ChEBI" id="CHEBI:58655"/>
        <dbReference type="EC" id="2.6.1.22"/>
    </reaction>
</comment>
<comment type="cofactor">
    <cofactor>
        <name>pyridoxal 5'-phosphate</name>
        <dbReference type="ChEBI" id="CHEBI:597326"/>
    </cofactor>
</comment>
<comment type="pathway">
    <text>Amino-acid degradation; 4-aminobutanoate degradation.</text>
</comment>
<comment type="similarity">
    <text evidence="2">Belongs to the class-III pyridoxal-phosphate-dependent aminotransferase family.</text>
</comment>
<gene>
    <name type="primary">gabT</name>
    <name type="synonym">ycnG</name>
    <name type="ordered locus">BSU03900</name>
</gene>